<evidence type="ECO:0000255" key="1">
    <source>
        <dbReference type="HAMAP-Rule" id="MF_01367"/>
    </source>
</evidence>
<evidence type="ECO:0000305" key="2"/>
<accession>P10137</accession>
<accession>Q2SRG3</accession>
<feature type="chain" id="PRO_0000128549" description="Large ribosomal subunit protein uL14">
    <location>
        <begin position="1"/>
        <end position="122"/>
    </location>
</feature>
<dbReference type="EMBL" id="X06414">
    <property type="protein sequence ID" value="CAA29714.1"/>
    <property type="molecule type" value="Genomic_DNA"/>
</dbReference>
<dbReference type="EMBL" id="CP000123">
    <property type="protein sequence ID" value="ABC01415.1"/>
    <property type="molecule type" value="Genomic_DNA"/>
</dbReference>
<dbReference type="PIR" id="S02841">
    <property type="entry name" value="R5YM14"/>
</dbReference>
<dbReference type="RefSeq" id="WP_011166903.1">
    <property type="nucleotide sequence ID" value="NC_007633.1"/>
</dbReference>
<dbReference type="SMR" id="P10137"/>
<dbReference type="GeneID" id="93426143"/>
<dbReference type="KEGG" id="mcp:MCAP_0686"/>
<dbReference type="HOGENOM" id="CLU_095071_2_1_14"/>
<dbReference type="PhylomeDB" id="P10137"/>
<dbReference type="Proteomes" id="UP000001928">
    <property type="component" value="Chromosome"/>
</dbReference>
<dbReference type="GO" id="GO:0022625">
    <property type="term" value="C:cytosolic large ribosomal subunit"/>
    <property type="evidence" value="ECO:0007669"/>
    <property type="project" value="TreeGrafter"/>
</dbReference>
<dbReference type="GO" id="GO:0070180">
    <property type="term" value="F:large ribosomal subunit rRNA binding"/>
    <property type="evidence" value="ECO:0007669"/>
    <property type="project" value="TreeGrafter"/>
</dbReference>
<dbReference type="GO" id="GO:0003735">
    <property type="term" value="F:structural constituent of ribosome"/>
    <property type="evidence" value="ECO:0007669"/>
    <property type="project" value="InterPro"/>
</dbReference>
<dbReference type="GO" id="GO:0006412">
    <property type="term" value="P:translation"/>
    <property type="evidence" value="ECO:0007669"/>
    <property type="project" value="UniProtKB-UniRule"/>
</dbReference>
<dbReference type="CDD" id="cd00337">
    <property type="entry name" value="Ribosomal_uL14"/>
    <property type="match status" value="1"/>
</dbReference>
<dbReference type="Gene3D" id="2.40.150.20">
    <property type="entry name" value="Ribosomal protein L14"/>
    <property type="match status" value="1"/>
</dbReference>
<dbReference type="HAMAP" id="MF_01367">
    <property type="entry name" value="Ribosomal_uL14"/>
    <property type="match status" value="1"/>
</dbReference>
<dbReference type="InterPro" id="IPR000218">
    <property type="entry name" value="Ribosomal_uL14"/>
</dbReference>
<dbReference type="InterPro" id="IPR005745">
    <property type="entry name" value="Ribosomal_uL14_bac-type"/>
</dbReference>
<dbReference type="InterPro" id="IPR019972">
    <property type="entry name" value="Ribosomal_uL14_CS"/>
</dbReference>
<dbReference type="InterPro" id="IPR036853">
    <property type="entry name" value="Ribosomal_uL14_sf"/>
</dbReference>
<dbReference type="NCBIfam" id="TIGR01067">
    <property type="entry name" value="rplN_bact"/>
    <property type="match status" value="1"/>
</dbReference>
<dbReference type="PANTHER" id="PTHR11761">
    <property type="entry name" value="50S/60S RIBOSOMAL PROTEIN L14/L23"/>
    <property type="match status" value="1"/>
</dbReference>
<dbReference type="PANTHER" id="PTHR11761:SF3">
    <property type="entry name" value="LARGE RIBOSOMAL SUBUNIT PROTEIN UL14M"/>
    <property type="match status" value="1"/>
</dbReference>
<dbReference type="Pfam" id="PF00238">
    <property type="entry name" value="Ribosomal_L14"/>
    <property type="match status" value="1"/>
</dbReference>
<dbReference type="SMART" id="SM01374">
    <property type="entry name" value="Ribosomal_L14"/>
    <property type="match status" value="1"/>
</dbReference>
<dbReference type="SUPFAM" id="SSF50193">
    <property type="entry name" value="Ribosomal protein L14"/>
    <property type="match status" value="1"/>
</dbReference>
<dbReference type="PROSITE" id="PS00049">
    <property type="entry name" value="RIBOSOMAL_L14"/>
    <property type="match status" value="1"/>
</dbReference>
<sequence length="122" mass="13148">MIQTLSKLKVADNSGAKEVRVIRNLGGSVRKFSGIGDIIICSVISATPGAVIKKGQVVKAVIVRTTRELRREDGTYIKFSENAAVLIKEDKTPRGTRIFGPIAREIKEAGFAKIASLAPEVL</sequence>
<proteinExistence type="inferred from homology"/>
<keyword id="KW-0687">Ribonucleoprotein</keyword>
<keyword id="KW-0689">Ribosomal protein</keyword>
<keyword id="KW-0694">RNA-binding</keyword>
<keyword id="KW-0699">rRNA-binding</keyword>
<organism>
    <name type="scientific">Mycoplasma capricolum subsp. capricolum (strain California kid / ATCC 27343 / NCTC 10154)</name>
    <dbReference type="NCBI Taxonomy" id="340047"/>
    <lineage>
        <taxon>Bacteria</taxon>
        <taxon>Bacillati</taxon>
        <taxon>Mycoplasmatota</taxon>
        <taxon>Mollicutes</taxon>
        <taxon>Mycoplasmataceae</taxon>
        <taxon>Mycoplasma</taxon>
    </lineage>
</organism>
<reference key="1">
    <citation type="journal article" date="1987" name="Mol. Gen. Genet.">
        <title>The ribosomal protein gene cluster of Mycoplasma capricolum.</title>
        <authorList>
            <person name="Ohkubo S."/>
            <person name="Muto A."/>
            <person name="Kawauchi Y."/>
            <person name="Yamao F."/>
            <person name="Osawa S."/>
        </authorList>
    </citation>
    <scope>NUCLEOTIDE SEQUENCE [GENOMIC DNA]</scope>
</reference>
<reference key="2">
    <citation type="submission" date="2005-09" db="EMBL/GenBank/DDBJ databases">
        <authorList>
            <person name="Glass J.I."/>
            <person name="Lartigue C."/>
            <person name="Pfannkoch C."/>
            <person name="Baden-Tillson H."/>
            <person name="Smith H.O."/>
            <person name="Venter J.C."/>
            <person name="Roske K."/>
            <person name="Wise K.S."/>
            <person name="Calcutt M.J."/>
            <person name="Nelson W.C."/>
            <person name="Nierman W.C."/>
        </authorList>
    </citation>
    <scope>NUCLEOTIDE SEQUENCE [LARGE SCALE GENOMIC DNA]</scope>
    <source>
        <strain>California kid / ATCC 27343 / NCTC 10154</strain>
    </source>
</reference>
<gene>
    <name evidence="1" type="primary">rplN</name>
    <name type="ordered locus">MCAP_0686</name>
</gene>
<comment type="function">
    <text evidence="1">Binds to 23S rRNA. Forms part of two intersubunit bridges in the 70S ribosome.</text>
</comment>
<comment type="subunit">
    <text evidence="1">Part of the 50S ribosomal subunit. Forms a cluster with proteins L3 and L19. In the 70S ribosome, L14 and L19 interact and together make contacts with the 16S rRNA in bridges B5 and B8.</text>
</comment>
<comment type="similarity">
    <text evidence="1">Belongs to the universal ribosomal protein uL14 family.</text>
</comment>
<name>RL14_MYCCT</name>
<protein>
    <recommendedName>
        <fullName evidence="1">Large ribosomal subunit protein uL14</fullName>
    </recommendedName>
    <alternativeName>
        <fullName evidence="2">50S ribosomal protein L14</fullName>
    </alternativeName>
</protein>